<reference key="1">
    <citation type="journal article" date="2010" name="Genome Biol.">
        <title>Structure and dynamics of the pan-genome of Streptococcus pneumoniae and closely related species.</title>
        <authorList>
            <person name="Donati C."/>
            <person name="Hiller N.L."/>
            <person name="Tettelin H."/>
            <person name="Muzzi A."/>
            <person name="Croucher N.J."/>
            <person name="Angiuoli S.V."/>
            <person name="Oggioni M."/>
            <person name="Dunning Hotopp J.C."/>
            <person name="Hu F.Z."/>
            <person name="Riley D.R."/>
            <person name="Covacci A."/>
            <person name="Mitchell T.J."/>
            <person name="Bentley S.D."/>
            <person name="Kilian M."/>
            <person name="Ehrlich G.D."/>
            <person name="Rappuoli R."/>
            <person name="Moxon E.R."/>
            <person name="Masignani V."/>
        </authorList>
    </citation>
    <scope>NUCLEOTIDE SEQUENCE [LARGE SCALE GENOMIC DNA]</scope>
    <source>
        <strain>P1031</strain>
    </source>
</reference>
<comment type="function">
    <text evidence="1 2">Modulates transcription in response to changes in cellular NADH/NAD(+) redox state (By similarity). Binds to the promoter of the aldehyde-alcohol dehydrogenase adhE gene. Functions as a redox-dependent repressor of adhE expression (By similarity).</text>
</comment>
<comment type="subunit">
    <text evidence="2">Homodimer.</text>
</comment>
<comment type="subcellular location">
    <subcellularLocation>
        <location evidence="2">Cytoplasm</location>
    </subcellularLocation>
</comment>
<comment type="similarity">
    <text evidence="2">Belongs to the transcriptional regulatory Rex family.</text>
</comment>
<protein>
    <recommendedName>
        <fullName evidence="2">Redox-sensing transcriptional repressor Rex</fullName>
    </recommendedName>
</protein>
<gene>
    <name evidence="2" type="primary">rex</name>
    <name type="ordered locus">SPP_1096</name>
</gene>
<dbReference type="EMBL" id="CP000920">
    <property type="protein sequence ID" value="ACO20950.1"/>
    <property type="molecule type" value="Genomic_DNA"/>
</dbReference>
<dbReference type="RefSeq" id="WP_000653403.1">
    <property type="nucleotide sequence ID" value="NC_012467.1"/>
</dbReference>
<dbReference type="SMR" id="C1CKF7"/>
<dbReference type="KEGG" id="spp:SPP_1096"/>
<dbReference type="HOGENOM" id="CLU_061534_1_1_9"/>
<dbReference type="GO" id="GO:0005737">
    <property type="term" value="C:cytoplasm"/>
    <property type="evidence" value="ECO:0007669"/>
    <property type="project" value="UniProtKB-SubCell"/>
</dbReference>
<dbReference type="GO" id="GO:0003677">
    <property type="term" value="F:DNA binding"/>
    <property type="evidence" value="ECO:0007669"/>
    <property type="project" value="UniProtKB-UniRule"/>
</dbReference>
<dbReference type="GO" id="GO:0003700">
    <property type="term" value="F:DNA-binding transcription factor activity"/>
    <property type="evidence" value="ECO:0007669"/>
    <property type="project" value="UniProtKB-UniRule"/>
</dbReference>
<dbReference type="GO" id="GO:0045892">
    <property type="term" value="P:negative regulation of DNA-templated transcription"/>
    <property type="evidence" value="ECO:0007669"/>
    <property type="project" value="InterPro"/>
</dbReference>
<dbReference type="GO" id="GO:0051775">
    <property type="term" value="P:response to redox state"/>
    <property type="evidence" value="ECO:0007669"/>
    <property type="project" value="InterPro"/>
</dbReference>
<dbReference type="Gene3D" id="3.40.50.720">
    <property type="entry name" value="NAD(P)-binding Rossmann-like Domain"/>
    <property type="match status" value="1"/>
</dbReference>
<dbReference type="Gene3D" id="1.10.10.10">
    <property type="entry name" value="Winged helix-like DNA-binding domain superfamily/Winged helix DNA-binding domain"/>
    <property type="match status" value="1"/>
</dbReference>
<dbReference type="HAMAP" id="MF_01131">
    <property type="entry name" value="Rex"/>
    <property type="match status" value="1"/>
</dbReference>
<dbReference type="InterPro" id="IPR003781">
    <property type="entry name" value="CoA-bd"/>
</dbReference>
<dbReference type="InterPro" id="IPR036291">
    <property type="entry name" value="NAD(P)-bd_dom_sf"/>
</dbReference>
<dbReference type="InterPro" id="IPR009718">
    <property type="entry name" value="Rex_DNA-bd_C_dom"/>
</dbReference>
<dbReference type="InterPro" id="IPR022876">
    <property type="entry name" value="Tscrpt_rep_Rex"/>
</dbReference>
<dbReference type="InterPro" id="IPR036388">
    <property type="entry name" value="WH-like_DNA-bd_sf"/>
</dbReference>
<dbReference type="InterPro" id="IPR036390">
    <property type="entry name" value="WH_DNA-bd_sf"/>
</dbReference>
<dbReference type="NCBIfam" id="NF003988">
    <property type="entry name" value="PRK05472.1-1"/>
    <property type="match status" value="1"/>
</dbReference>
<dbReference type="NCBIfam" id="NF003989">
    <property type="entry name" value="PRK05472.1-3"/>
    <property type="match status" value="1"/>
</dbReference>
<dbReference type="NCBIfam" id="NF003991">
    <property type="entry name" value="PRK05472.1-5"/>
    <property type="match status" value="1"/>
</dbReference>
<dbReference type="NCBIfam" id="NF003994">
    <property type="entry name" value="PRK05472.2-3"/>
    <property type="match status" value="1"/>
</dbReference>
<dbReference type="NCBIfam" id="NF003995">
    <property type="entry name" value="PRK05472.2-4"/>
    <property type="match status" value="1"/>
</dbReference>
<dbReference type="NCBIfam" id="NF003996">
    <property type="entry name" value="PRK05472.2-5"/>
    <property type="match status" value="1"/>
</dbReference>
<dbReference type="PANTHER" id="PTHR35786">
    <property type="entry name" value="REDOX-SENSING TRANSCRIPTIONAL REPRESSOR REX"/>
    <property type="match status" value="1"/>
</dbReference>
<dbReference type="PANTHER" id="PTHR35786:SF1">
    <property type="entry name" value="REDOX-SENSING TRANSCRIPTIONAL REPRESSOR REX 1"/>
    <property type="match status" value="1"/>
</dbReference>
<dbReference type="Pfam" id="PF02629">
    <property type="entry name" value="CoA_binding"/>
    <property type="match status" value="1"/>
</dbReference>
<dbReference type="Pfam" id="PF06971">
    <property type="entry name" value="Put_DNA-bind_N"/>
    <property type="match status" value="1"/>
</dbReference>
<dbReference type="SMART" id="SM00881">
    <property type="entry name" value="CoA_binding"/>
    <property type="match status" value="1"/>
</dbReference>
<dbReference type="SUPFAM" id="SSF51735">
    <property type="entry name" value="NAD(P)-binding Rossmann-fold domains"/>
    <property type="match status" value="1"/>
</dbReference>
<dbReference type="SUPFAM" id="SSF46785">
    <property type="entry name" value="Winged helix' DNA-binding domain"/>
    <property type="match status" value="1"/>
</dbReference>
<evidence type="ECO:0000250" key="1">
    <source>
        <dbReference type="UniProtKB" id="Q04KJ6"/>
    </source>
</evidence>
<evidence type="ECO:0000255" key="2">
    <source>
        <dbReference type="HAMAP-Rule" id="MF_01131"/>
    </source>
</evidence>
<proteinExistence type="inferred from homology"/>
<accession>C1CKF7</accession>
<keyword id="KW-0963">Cytoplasm</keyword>
<keyword id="KW-0238">DNA-binding</keyword>
<keyword id="KW-0520">NAD</keyword>
<keyword id="KW-0678">Repressor</keyword>
<keyword id="KW-0804">Transcription</keyword>
<keyword id="KW-0805">Transcription regulation</keyword>
<name>REX_STRZP</name>
<organism>
    <name type="scientific">Streptococcus pneumoniae (strain P1031)</name>
    <dbReference type="NCBI Taxonomy" id="488223"/>
    <lineage>
        <taxon>Bacteria</taxon>
        <taxon>Bacillati</taxon>
        <taxon>Bacillota</taxon>
        <taxon>Bacilli</taxon>
        <taxon>Lactobacillales</taxon>
        <taxon>Streptococcaceae</taxon>
        <taxon>Streptococcus</taxon>
    </lineage>
</organism>
<feature type="chain" id="PRO_1000164091" description="Redox-sensing transcriptional repressor Rex">
    <location>
        <begin position="1"/>
        <end position="213"/>
    </location>
</feature>
<feature type="DNA-binding region" description="H-T-H motif" evidence="2">
    <location>
        <begin position="18"/>
        <end position="57"/>
    </location>
</feature>
<feature type="binding site" evidence="2">
    <location>
        <begin position="92"/>
        <end position="97"/>
    </location>
    <ligand>
        <name>NAD(+)</name>
        <dbReference type="ChEBI" id="CHEBI:57540"/>
    </ligand>
</feature>
<sequence>MKDKQFAIPKATAKRLSLYYRIFKRFHAEKIERANSKQIAEAIGIDSATVRRDFSYFGELGRRGFGYDVKKLMTFFADLLNDNSITNVMLVGIGNMGHALLHYRFHERNKMKIIMAFDLDDHPEVGTQTPDGIPIYGISQIKDKIKDADVKTAILTVPSVKSQEVANLLVDAGVKGILSFSPVHLHLPKDVVVQYVDLTSELQTLLYFMRKED</sequence>